<proteinExistence type="evidence at transcript level"/>
<keyword id="KW-0106">Calcium</keyword>
<keyword id="KW-0479">Metal-binding</keyword>
<keyword id="KW-1185">Reference proteome</keyword>
<keyword id="KW-0677">Repeat</keyword>
<comment type="function">
    <text evidence="1">May function as a specific light chain of unconventional myosin-10 (MYO10), also enhances MYO10 translation, possibly by acting as a chaperone for the emerging MYO10 heavy chain protein. May compete with calmodulin by binding, with different affinities, to cellular substrates (By similarity).</text>
</comment>
<comment type="subunit">
    <text evidence="1">Interacts with MYO10, the interaction is calcium-dependent and essential for MYO10 function in filopodial extension.</text>
</comment>
<comment type="miscellaneous">
    <text evidence="1">Binds four calcium ions.</text>
</comment>
<comment type="similarity">
    <text evidence="3">Belongs to the calmodulin family.</text>
</comment>
<organism>
    <name type="scientific">Mus musculus</name>
    <name type="common">Mouse</name>
    <dbReference type="NCBI Taxonomy" id="10090"/>
    <lineage>
        <taxon>Eukaryota</taxon>
        <taxon>Metazoa</taxon>
        <taxon>Chordata</taxon>
        <taxon>Craniata</taxon>
        <taxon>Vertebrata</taxon>
        <taxon>Euteleostomi</taxon>
        <taxon>Mammalia</taxon>
        <taxon>Eutheria</taxon>
        <taxon>Euarchontoglires</taxon>
        <taxon>Glires</taxon>
        <taxon>Rodentia</taxon>
        <taxon>Myomorpha</taxon>
        <taxon>Muroidea</taxon>
        <taxon>Muridae</taxon>
        <taxon>Murinae</taxon>
        <taxon>Mus</taxon>
        <taxon>Mus</taxon>
    </lineage>
</organism>
<accession>Q9D6P8</accession>
<accession>Q99K52</accession>
<feature type="chain" id="PRO_0000284521" description="Calmodulin-like protein 3">
    <location>
        <begin position="1"/>
        <end position="149"/>
    </location>
</feature>
<feature type="domain" description="EF-hand 1" evidence="2">
    <location>
        <begin position="8"/>
        <end position="43"/>
    </location>
</feature>
<feature type="domain" description="EF-hand 2" evidence="2">
    <location>
        <begin position="44"/>
        <end position="79"/>
    </location>
</feature>
<feature type="domain" description="EF-hand 3" evidence="2">
    <location>
        <begin position="81"/>
        <end position="116"/>
    </location>
</feature>
<feature type="domain" description="EF-hand 4" evidence="2">
    <location>
        <begin position="117"/>
        <end position="149"/>
    </location>
</feature>
<feature type="binding site" evidence="2">
    <location>
        <position position="21"/>
    </location>
    <ligand>
        <name>Ca(2+)</name>
        <dbReference type="ChEBI" id="CHEBI:29108"/>
        <label>1</label>
    </ligand>
</feature>
<feature type="binding site" evidence="2">
    <location>
        <position position="23"/>
    </location>
    <ligand>
        <name>Ca(2+)</name>
        <dbReference type="ChEBI" id="CHEBI:29108"/>
        <label>1</label>
    </ligand>
</feature>
<feature type="binding site" evidence="2">
    <location>
        <position position="25"/>
    </location>
    <ligand>
        <name>Ca(2+)</name>
        <dbReference type="ChEBI" id="CHEBI:29108"/>
        <label>1</label>
    </ligand>
</feature>
<feature type="binding site" evidence="2">
    <location>
        <position position="27"/>
    </location>
    <ligand>
        <name>Ca(2+)</name>
        <dbReference type="ChEBI" id="CHEBI:29108"/>
        <label>1</label>
    </ligand>
</feature>
<feature type="binding site" evidence="2">
    <location>
        <position position="32"/>
    </location>
    <ligand>
        <name>Ca(2+)</name>
        <dbReference type="ChEBI" id="CHEBI:29108"/>
        <label>1</label>
    </ligand>
</feature>
<feature type="binding site" evidence="2">
    <location>
        <position position="57"/>
    </location>
    <ligand>
        <name>Ca(2+)</name>
        <dbReference type="ChEBI" id="CHEBI:29108"/>
        <label>2</label>
    </ligand>
</feature>
<feature type="binding site" evidence="2">
    <location>
        <position position="59"/>
    </location>
    <ligand>
        <name>Ca(2+)</name>
        <dbReference type="ChEBI" id="CHEBI:29108"/>
        <label>2</label>
    </ligand>
</feature>
<feature type="binding site" evidence="2">
    <location>
        <position position="61"/>
    </location>
    <ligand>
        <name>Ca(2+)</name>
        <dbReference type="ChEBI" id="CHEBI:29108"/>
        <label>2</label>
    </ligand>
</feature>
<feature type="binding site" evidence="2">
    <location>
        <position position="63"/>
    </location>
    <ligand>
        <name>Ca(2+)</name>
        <dbReference type="ChEBI" id="CHEBI:29108"/>
        <label>2</label>
    </ligand>
</feature>
<feature type="binding site" evidence="2">
    <location>
        <position position="68"/>
    </location>
    <ligand>
        <name>Ca(2+)</name>
        <dbReference type="ChEBI" id="CHEBI:29108"/>
        <label>2</label>
    </ligand>
</feature>
<feature type="binding site" evidence="2">
    <location>
        <position position="94"/>
    </location>
    <ligand>
        <name>Ca(2+)</name>
        <dbReference type="ChEBI" id="CHEBI:29108"/>
        <label>3</label>
    </ligand>
</feature>
<feature type="binding site" evidence="2">
    <location>
        <position position="96"/>
    </location>
    <ligand>
        <name>Ca(2+)</name>
        <dbReference type="ChEBI" id="CHEBI:29108"/>
        <label>3</label>
    </ligand>
</feature>
<feature type="binding site" evidence="2">
    <location>
        <position position="98"/>
    </location>
    <ligand>
        <name>Ca(2+)</name>
        <dbReference type="ChEBI" id="CHEBI:29108"/>
        <label>3</label>
    </ligand>
</feature>
<feature type="binding site" evidence="2">
    <location>
        <position position="105"/>
    </location>
    <ligand>
        <name>Ca(2+)</name>
        <dbReference type="ChEBI" id="CHEBI:29108"/>
        <label>3</label>
    </ligand>
</feature>
<feature type="binding site" evidence="2">
    <location>
        <position position="130"/>
    </location>
    <ligand>
        <name>Ca(2+)</name>
        <dbReference type="ChEBI" id="CHEBI:29108"/>
        <label>4</label>
    </ligand>
</feature>
<feature type="binding site" evidence="2">
    <location>
        <position position="132"/>
    </location>
    <ligand>
        <name>Ca(2+)</name>
        <dbReference type="ChEBI" id="CHEBI:29108"/>
        <label>4</label>
    </ligand>
</feature>
<feature type="binding site" evidence="2">
    <location>
        <position position="134"/>
    </location>
    <ligand>
        <name>Ca(2+)</name>
        <dbReference type="ChEBI" id="CHEBI:29108"/>
        <label>4</label>
    </ligand>
</feature>
<feature type="binding site" evidence="2">
    <location>
        <position position="136"/>
    </location>
    <ligand>
        <name>Ca(2+)</name>
        <dbReference type="ChEBI" id="CHEBI:29108"/>
        <label>4</label>
    </ligand>
</feature>
<feature type="binding site" evidence="2">
    <location>
        <position position="141"/>
    </location>
    <ligand>
        <name>Ca(2+)</name>
        <dbReference type="ChEBI" id="CHEBI:29108"/>
        <label>4</label>
    </ligand>
</feature>
<feature type="sequence conflict" description="In Ref. 2; AAH05457." evidence="3" ref="2">
    <original>E</original>
    <variation>K</variation>
    <location>
        <position position="68"/>
    </location>
</feature>
<protein>
    <recommendedName>
        <fullName>Calmodulin-like protein 3</fullName>
    </recommendedName>
</protein>
<evidence type="ECO:0000250" key="1"/>
<evidence type="ECO:0000255" key="2">
    <source>
        <dbReference type="PROSITE-ProRule" id="PRU00448"/>
    </source>
</evidence>
<evidence type="ECO:0000305" key="3"/>
<gene>
    <name type="primary">Calml3</name>
</gene>
<dbReference type="EMBL" id="AK010118">
    <property type="protein sequence ID" value="BAB26712.1"/>
    <property type="molecule type" value="mRNA"/>
</dbReference>
<dbReference type="EMBL" id="BC005457">
    <property type="protein sequence ID" value="AAH05457.1"/>
    <property type="molecule type" value="mRNA"/>
</dbReference>
<dbReference type="CCDS" id="CCDS26214.1"/>
<dbReference type="RefSeq" id="NP_081692.1">
    <property type="nucleotide sequence ID" value="NM_027416.3"/>
</dbReference>
<dbReference type="SMR" id="Q9D6P8"/>
<dbReference type="BioGRID" id="214028">
    <property type="interactions" value="144"/>
</dbReference>
<dbReference type="FunCoup" id="Q9D6P8">
    <property type="interactions" value="2073"/>
</dbReference>
<dbReference type="IntAct" id="Q9D6P8">
    <property type="interactions" value="147"/>
</dbReference>
<dbReference type="STRING" id="10090.ENSMUSP00000076880"/>
<dbReference type="iPTMnet" id="Q9D6P8"/>
<dbReference type="PhosphoSitePlus" id="Q9D6P8"/>
<dbReference type="SwissPalm" id="Q9D6P8"/>
<dbReference type="jPOST" id="Q9D6P8"/>
<dbReference type="PaxDb" id="10090-ENSMUSP00000076880"/>
<dbReference type="PeptideAtlas" id="Q9D6P8"/>
<dbReference type="ProteomicsDB" id="265505"/>
<dbReference type="Antibodypedia" id="24109">
    <property type="antibodies" value="137 antibodies from 21 providers"/>
</dbReference>
<dbReference type="DNASU" id="70405"/>
<dbReference type="Ensembl" id="ENSMUST00000077698.5">
    <property type="protein sequence ID" value="ENSMUSP00000076880.4"/>
    <property type="gene ID" value="ENSMUSG00000063130.5"/>
</dbReference>
<dbReference type="GeneID" id="70405"/>
<dbReference type="KEGG" id="mmu:70405"/>
<dbReference type="UCSC" id="uc007pja.2">
    <property type="organism name" value="mouse"/>
</dbReference>
<dbReference type="AGR" id="MGI:1917655"/>
<dbReference type="CTD" id="810"/>
<dbReference type="MGI" id="MGI:1917655">
    <property type="gene designation" value="Calml3"/>
</dbReference>
<dbReference type="VEuPathDB" id="HostDB:ENSMUSG00000063130"/>
<dbReference type="eggNOG" id="KOG0027">
    <property type="taxonomic scope" value="Eukaryota"/>
</dbReference>
<dbReference type="GeneTree" id="ENSGT00950000182980"/>
<dbReference type="HOGENOM" id="CLU_061288_2_0_1"/>
<dbReference type="InParanoid" id="Q9D6P8"/>
<dbReference type="OMA" id="CITTHEL"/>
<dbReference type="OrthoDB" id="26525at2759"/>
<dbReference type="PhylomeDB" id="Q9D6P8"/>
<dbReference type="TreeFam" id="TF300912"/>
<dbReference type="BioGRID-ORCS" id="70405">
    <property type="hits" value="1 hit in 79 CRISPR screens"/>
</dbReference>
<dbReference type="ChiTaRS" id="Calml3">
    <property type="organism name" value="mouse"/>
</dbReference>
<dbReference type="PRO" id="PR:Q9D6P8"/>
<dbReference type="Proteomes" id="UP000000589">
    <property type="component" value="Chromosome 13"/>
</dbReference>
<dbReference type="RNAct" id="Q9D6P8">
    <property type="molecule type" value="protein"/>
</dbReference>
<dbReference type="Bgee" id="ENSMUSG00000063130">
    <property type="expression patterns" value="Expressed in conjunctival fornix and 70 other cell types or tissues"/>
</dbReference>
<dbReference type="ExpressionAtlas" id="Q9D6P8">
    <property type="expression patterns" value="baseline and differential"/>
</dbReference>
<dbReference type="GO" id="GO:0150034">
    <property type="term" value="C:distal axon"/>
    <property type="evidence" value="ECO:0007669"/>
    <property type="project" value="UniProtKB-ARBA"/>
</dbReference>
<dbReference type="GO" id="GO:0043209">
    <property type="term" value="C:myelin sheath"/>
    <property type="evidence" value="ECO:0007669"/>
    <property type="project" value="UniProtKB-ARBA"/>
</dbReference>
<dbReference type="GO" id="GO:0005509">
    <property type="term" value="F:calcium ion binding"/>
    <property type="evidence" value="ECO:0007669"/>
    <property type="project" value="InterPro"/>
</dbReference>
<dbReference type="GO" id="GO:0051649">
    <property type="term" value="P:establishment of localization in cell"/>
    <property type="evidence" value="ECO:0007669"/>
    <property type="project" value="UniProtKB-ARBA"/>
</dbReference>
<dbReference type="CDD" id="cd00051">
    <property type="entry name" value="EFh"/>
    <property type="match status" value="2"/>
</dbReference>
<dbReference type="FunFam" id="1.10.238.10:FF:000006">
    <property type="entry name" value="Calmodulin 1"/>
    <property type="match status" value="1"/>
</dbReference>
<dbReference type="FunFam" id="1.10.238.10:FF:000398">
    <property type="entry name" value="Calmodulin-like protein 3"/>
    <property type="match status" value="1"/>
</dbReference>
<dbReference type="Gene3D" id="1.10.238.10">
    <property type="entry name" value="EF-hand"/>
    <property type="match status" value="3"/>
</dbReference>
<dbReference type="InterPro" id="IPR050230">
    <property type="entry name" value="CALM/Myosin/TropC-like"/>
</dbReference>
<dbReference type="InterPro" id="IPR011992">
    <property type="entry name" value="EF-hand-dom_pair"/>
</dbReference>
<dbReference type="InterPro" id="IPR018247">
    <property type="entry name" value="EF_Hand_1_Ca_BS"/>
</dbReference>
<dbReference type="InterPro" id="IPR002048">
    <property type="entry name" value="EF_hand_dom"/>
</dbReference>
<dbReference type="PANTHER" id="PTHR23048:SF0">
    <property type="entry name" value="CALMODULIN LIKE 3"/>
    <property type="match status" value="1"/>
</dbReference>
<dbReference type="PANTHER" id="PTHR23048">
    <property type="entry name" value="MYOSIN LIGHT CHAIN 1, 3"/>
    <property type="match status" value="1"/>
</dbReference>
<dbReference type="Pfam" id="PF13499">
    <property type="entry name" value="EF-hand_7"/>
    <property type="match status" value="2"/>
</dbReference>
<dbReference type="SMART" id="SM00054">
    <property type="entry name" value="EFh"/>
    <property type="match status" value="4"/>
</dbReference>
<dbReference type="SUPFAM" id="SSF47473">
    <property type="entry name" value="EF-hand"/>
    <property type="match status" value="1"/>
</dbReference>
<dbReference type="PROSITE" id="PS00018">
    <property type="entry name" value="EF_HAND_1"/>
    <property type="match status" value="4"/>
</dbReference>
<dbReference type="PROSITE" id="PS50222">
    <property type="entry name" value="EF_HAND_2"/>
    <property type="match status" value="4"/>
</dbReference>
<sequence length="149" mass="16701">MADQLTEEQIAEFKEAFSLFDKDGDGSITTQELGTVMRSLGQNPTEAELQGMVNEIDKDGNGTVDFPEFLTMMSRKMKDTDSEEEIREAFRVFDKDGNGFVSAAELRHVMTKLGEKLSDEEVDEMIQAADTDGDGQVNYEEFVHMLVSK</sequence>
<name>CALL3_MOUSE</name>
<reference key="1">
    <citation type="journal article" date="2005" name="Science">
        <title>The transcriptional landscape of the mammalian genome.</title>
        <authorList>
            <person name="Carninci P."/>
            <person name="Kasukawa T."/>
            <person name="Katayama S."/>
            <person name="Gough J."/>
            <person name="Frith M.C."/>
            <person name="Maeda N."/>
            <person name="Oyama R."/>
            <person name="Ravasi T."/>
            <person name="Lenhard B."/>
            <person name="Wells C."/>
            <person name="Kodzius R."/>
            <person name="Shimokawa K."/>
            <person name="Bajic V.B."/>
            <person name="Brenner S.E."/>
            <person name="Batalov S."/>
            <person name="Forrest A.R."/>
            <person name="Zavolan M."/>
            <person name="Davis M.J."/>
            <person name="Wilming L.G."/>
            <person name="Aidinis V."/>
            <person name="Allen J.E."/>
            <person name="Ambesi-Impiombato A."/>
            <person name="Apweiler R."/>
            <person name="Aturaliya R.N."/>
            <person name="Bailey T.L."/>
            <person name="Bansal M."/>
            <person name="Baxter L."/>
            <person name="Beisel K.W."/>
            <person name="Bersano T."/>
            <person name="Bono H."/>
            <person name="Chalk A.M."/>
            <person name="Chiu K.P."/>
            <person name="Choudhary V."/>
            <person name="Christoffels A."/>
            <person name="Clutterbuck D.R."/>
            <person name="Crowe M.L."/>
            <person name="Dalla E."/>
            <person name="Dalrymple B.P."/>
            <person name="de Bono B."/>
            <person name="Della Gatta G."/>
            <person name="di Bernardo D."/>
            <person name="Down T."/>
            <person name="Engstrom P."/>
            <person name="Fagiolini M."/>
            <person name="Faulkner G."/>
            <person name="Fletcher C.F."/>
            <person name="Fukushima T."/>
            <person name="Furuno M."/>
            <person name="Futaki S."/>
            <person name="Gariboldi M."/>
            <person name="Georgii-Hemming P."/>
            <person name="Gingeras T.R."/>
            <person name="Gojobori T."/>
            <person name="Green R.E."/>
            <person name="Gustincich S."/>
            <person name="Harbers M."/>
            <person name="Hayashi Y."/>
            <person name="Hensch T.K."/>
            <person name="Hirokawa N."/>
            <person name="Hill D."/>
            <person name="Huminiecki L."/>
            <person name="Iacono M."/>
            <person name="Ikeo K."/>
            <person name="Iwama A."/>
            <person name="Ishikawa T."/>
            <person name="Jakt M."/>
            <person name="Kanapin A."/>
            <person name="Katoh M."/>
            <person name="Kawasawa Y."/>
            <person name="Kelso J."/>
            <person name="Kitamura H."/>
            <person name="Kitano H."/>
            <person name="Kollias G."/>
            <person name="Krishnan S.P."/>
            <person name="Kruger A."/>
            <person name="Kummerfeld S.K."/>
            <person name="Kurochkin I.V."/>
            <person name="Lareau L.F."/>
            <person name="Lazarevic D."/>
            <person name="Lipovich L."/>
            <person name="Liu J."/>
            <person name="Liuni S."/>
            <person name="McWilliam S."/>
            <person name="Madan Babu M."/>
            <person name="Madera M."/>
            <person name="Marchionni L."/>
            <person name="Matsuda H."/>
            <person name="Matsuzawa S."/>
            <person name="Miki H."/>
            <person name="Mignone F."/>
            <person name="Miyake S."/>
            <person name="Morris K."/>
            <person name="Mottagui-Tabar S."/>
            <person name="Mulder N."/>
            <person name="Nakano N."/>
            <person name="Nakauchi H."/>
            <person name="Ng P."/>
            <person name="Nilsson R."/>
            <person name="Nishiguchi S."/>
            <person name="Nishikawa S."/>
            <person name="Nori F."/>
            <person name="Ohara O."/>
            <person name="Okazaki Y."/>
            <person name="Orlando V."/>
            <person name="Pang K.C."/>
            <person name="Pavan W.J."/>
            <person name="Pavesi G."/>
            <person name="Pesole G."/>
            <person name="Petrovsky N."/>
            <person name="Piazza S."/>
            <person name="Reed J."/>
            <person name="Reid J.F."/>
            <person name="Ring B.Z."/>
            <person name="Ringwald M."/>
            <person name="Rost B."/>
            <person name="Ruan Y."/>
            <person name="Salzberg S.L."/>
            <person name="Sandelin A."/>
            <person name="Schneider C."/>
            <person name="Schoenbach C."/>
            <person name="Sekiguchi K."/>
            <person name="Semple C.A."/>
            <person name="Seno S."/>
            <person name="Sessa L."/>
            <person name="Sheng Y."/>
            <person name="Shibata Y."/>
            <person name="Shimada H."/>
            <person name="Shimada K."/>
            <person name="Silva D."/>
            <person name="Sinclair B."/>
            <person name="Sperling S."/>
            <person name="Stupka E."/>
            <person name="Sugiura K."/>
            <person name="Sultana R."/>
            <person name="Takenaka Y."/>
            <person name="Taki K."/>
            <person name="Tammoja K."/>
            <person name="Tan S.L."/>
            <person name="Tang S."/>
            <person name="Taylor M.S."/>
            <person name="Tegner J."/>
            <person name="Teichmann S.A."/>
            <person name="Ueda H.R."/>
            <person name="van Nimwegen E."/>
            <person name="Verardo R."/>
            <person name="Wei C.L."/>
            <person name="Yagi K."/>
            <person name="Yamanishi H."/>
            <person name="Zabarovsky E."/>
            <person name="Zhu S."/>
            <person name="Zimmer A."/>
            <person name="Hide W."/>
            <person name="Bult C."/>
            <person name="Grimmond S.M."/>
            <person name="Teasdale R.D."/>
            <person name="Liu E.T."/>
            <person name="Brusic V."/>
            <person name="Quackenbush J."/>
            <person name="Wahlestedt C."/>
            <person name="Mattick J.S."/>
            <person name="Hume D.A."/>
            <person name="Kai C."/>
            <person name="Sasaki D."/>
            <person name="Tomaru Y."/>
            <person name="Fukuda S."/>
            <person name="Kanamori-Katayama M."/>
            <person name="Suzuki M."/>
            <person name="Aoki J."/>
            <person name="Arakawa T."/>
            <person name="Iida J."/>
            <person name="Imamura K."/>
            <person name="Itoh M."/>
            <person name="Kato T."/>
            <person name="Kawaji H."/>
            <person name="Kawagashira N."/>
            <person name="Kawashima T."/>
            <person name="Kojima M."/>
            <person name="Kondo S."/>
            <person name="Konno H."/>
            <person name="Nakano K."/>
            <person name="Ninomiya N."/>
            <person name="Nishio T."/>
            <person name="Okada M."/>
            <person name="Plessy C."/>
            <person name="Shibata K."/>
            <person name="Shiraki T."/>
            <person name="Suzuki S."/>
            <person name="Tagami M."/>
            <person name="Waki K."/>
            <person name="Watahiki A."/>
            <person name="Okamura-Oho Y."/>
            <person name="Suzuki H."/>
            <person name="Kawai J."/>
            <person name="Hayashizaki Y."/>
        </authorList>
    </citation>
    <scope>NUCLEOTIDE SEQUENCE [LARGE SCALE MRNA]</scope>
    <source>
        <strain>C57BL/6J</strain>
        <tissue>Tongue</tissue>
    </source>
</reference>
<reference key="2">
    <citation type="journal article" date="2004" name="Genome Res.">
        <title>The status, quality, and expansion of the NIH full-length cDNA project: the Mammalian Gene Collection (MGC).</title>
        <authorList>
            <consortium name="The MGC Project Team"/>
        </authorList>
    </citation>
    <scope>NUCLEOTIDE SEQUENCE [LARGE SCALE MRNA]</scope>
    <source>
        <strain>Czech II</strain>
        <tissue>Mammary tumor</tissue>
    </source>
</reference>